<sequence>MATRRIVATEKSILEKDDHIGSSPAAGEKSNITPAVPLDVILKLLAFTLAMVVIPIGSYFVTVNSIFKGNSTYAGALAAIMANVVLVAYVVVAMNEDQTEQEKAKEGKKDR</sequence>
<comment type="function">
    <text evidence="1">Required for the assembly of the V0 complex of the vacuolar ATPase (V-ATPase) in the endoplasmic reticulum.</text>
</comment>
<comment type="subcellular location">
    <subcellularLocation>
        <location evidence="1">Endoplasmic reticulum membrane</location>
        <topology evidence="1">Multi-pass membrane protein</topology>
    </subcellularLocation>
    <subcellularLocation>
        <location evidence="1">Endoplasmic reticulum-Golgi intermediate compartment membrane</location>
        <topology evidence="1">Multi-pass membrane protein</topology>
    </subcellularLocation>
    <subcellularLocation>
        <location evidence="1">Cytoplasmic vesicle</location>
        <location evidence="1">COPII-coated vesicle membrane</location>
        <topology evidence="1">Multi-pass membrane protein</topology>
    </subcellularLocation>
</comment>
<comment type="similarity">
    <text evidence="1">Belongs to the VMA21 family.</text>
</comment>
<feature type="chain" id="PRO_0000377590" description="Vacuolar ATPase assembly integral membrane protein VMA21">
    <location>
        <begin position="1"/>
        <end position="111"/>
    </location>
</feature>
<feature type="topological domain" description="Cytoplasmic" evidence="1">
    <location>
        <begin position="1"/>
        <end position="39"/>
    </location>
</feature>
<feature type="transmembrane region" description="Helical" evidence="1">
    <location>
        <begin position="40"/>
        <end position="60"/>
    </location>
</feature>
<feature type="topological domain" description="Lumenal" evidence="1">
    <location>
        <begin position="61"/>
        <end position="73"/>
    </location>
</feature>
<feature type="transmembrane region" description="Helical" evidence="1">
    <location>
        <begin position="74"/>
        <end position="94"/>
    </location>
</feature>
<feature type="topological domain" description="Cytoplasmic" evidence="1">
    <location>
        <begin position="95"/>
        <end position="111"/>
    </location>
</feature>
<feature type="short sequence motif" description="Prevents secretion from ER">
    <location>
        <begin position="108"/>
        <end position="111"/>
    </location>
</feature>
<name>VMA21_PYRO7</name>
<gene>
    <name evidence="1" type="primary">VMA21</name>
    <name type="ORF">MGG_09929</name>
</gene>
<proteinExistence type="inferred from homology"/>
<evidence type="ECO:0000255" key="1">
    <source>
        <dbReference type="HAMAP-Rule" id="MF_03058"/>
    </source>
</evidence>
<accession>A4R0J5</accession>
<accession>G4MRJ5</accession>
<reference key="1">
    <citation type="journal article" date="2005" name="Nature">
        <title>The genome sequence of the rice blast fungus Magnaporthe grisea.</title>
        <authorList>
            <person name="Dean R.A."/>
            <person name="Talbot N.J."/>
            <person name="Ebbole D.J."/>
            <person name="Farman M.L."/>
            <person name="Mitchell T.K."/>
            <person name="Orbach M.J."/>
            <person name="Thon M.R."/>
            <person name="Kulkarni R."/>
            <person name="Xu J.-R."/>
            <person name="Pan H."/>
            <person name="Read N.D."/>
            <person name="Lee Y.-H."/>
            <person name="Carbone I."/>
            <person name="Brown D."/>
            <person name="Oh Y.Y."/>
            <person name="Donofrio N."/>
            <person name="Jeong J.S."/>
            <person name="Soanes D.M."/>
            <person name="Djonovic S."/>
            <person name="Kolomiets E."/>
            <person name="Rehmeyer C."/>
            <person name="Li W."/>
            <person name="Harding M."/>
            <person name="Kim S."/>
            <person name="Lebrun M.-H."/>
            <person name="Bohnert H."/>
            <person name="Coughlan S."/>
            <person name="Butler J."/>
            <person name="Calvo S.E."/>
            <person name="Ma L.-J."/>
            <person name="Nicol R."/>
            <person name="Purcell S."/>
            <person name="Nusbaum C."/>
            <person name="Galagan J.E."/>
            <person name="Birren B.W."/>
        </authorList>
    </citation>
    <scope>NUCLEOTIDE SEQUENCE [LARGE SCALE GENOMIC DNA]</scope>
    <source>
        <strain>70-15 / ATCC MYA-4617 / FGSC 8958</strain>
    </source>
</reference>
<keyword id="KW-0968">Cytoplasmic vesicle</keyword>
<keyword id="KW-0256">Endoplasmic reticulum</keyword>
<keyword id="KW-0472">Membrane</keyword>
<keyword id="KW-1185">Reference proteome</keyword>
<keyword id="KW-0812">Transmembrane</keyword>
<keyword id="KW-1133">Transmembrane helix</keyword>
<organism>
    <name type="scientific">Pyricularia oryzae (strain 70-15 / ATCC MYA-4617 / FGSC 8958)</name>
    <name type="common">Rice blast fungus</name>
    <name type="synonym">Magnaporthe oryzae</name>
    <dbReference type="NCBI Taxonomy" id="242507"/>
    <lineage>
        <taxon>Eukaryota</taxon>
        <taxon>Fungi</taxon>
        <taxon>Dikarya</taxon>
        <taxon>Ascomycota</taxon>
        <taxon>Pezizomycotina</taxon>
        <taxon>Sordariomycetes</taxon>
        <taxon>Sordariomycetidae</taxon>
        <taxon>Magnaporthales</taxon>
        <taxon>Pyriculariaceae</taxon>
        <taxon>Pyricularia</taxon>
    </lineage>
</organism>
<protein>
    <recommendedName>
        <fullName evidence="1">Vacuolar ATPase assembly integral membrane protein VMA21</fullName>
    </recommendedName>
</protein>
<dbReference type="EMBL" id="CM001231">
    <property type="protein sequence ID" value="EHA57418.1"/>
    <property type="molecule type" value="Genomic_DNA"/>
</dbReference>
<dbReference type="RefSeq" id="XP_003710030.1">
    <property type="nucleotide sequence ID" value="XM_003709982.1"/>
</dbReference>
<dbReference type="SMR" id="A4R0J5"/>
<dbReference type="FunCoup" id="A4R0J5">
    <property type="interactions" value="47"/>
</dbReference>
<dbReference type="STRING" id="242507.A4R0J5"/>
<dbReference type="EnsemblFungi" id="MGG_09929T0">
    <property type="protein sequence ID" value="MGG_09929T0"/>
    <property type="gene ID" value="MGG_09929"/>
</dbReference>
<dbReference type="GeneID" id="2680899"/>
<dbReference type="KEGG" id="mgr:MGG_09929"/>
<dbReference type="VEuPathDB" id="FungiDB:MGG_09929"/>
<dbReference type="eggNOG" id="ENOG502SBNA">
    <property type="taxonomic scope" value="Eukaryota"/>
</dbReference>
<dbReference type="HOGENOM" id="CLU_154717_1_1_1"/>
<dbReference type="InParanoid" id="A4R0J5"/>
<dbReference type="OMA" id="AMKEDQT"/>
<dbReference type="OrthoDB" id="160405at2759"/>
<dbReference type="Proteomes" id="UP000009058">
    <property type="component" value="Chromosome 1"/>
</dbReference>
<dbReference type="GO" id="GO:0005789">
    <property type="term" value="C:endoplasmic reticulum membrane"/>
    <property type="evidence" value="ECO:0007669"/>
    <property type="project" value="UniProtKB-SubCell"/>
</dbReference>
<dbReference type="GO" id="GO:0033116">
    <property type="term" value="C:endoplasmic reticulum-Golgi intermediate compartment membrane"/>
    <property type="evidence" value="ECO:0007669"/>
    <property type="project" value="UniProtKB-SubCell"/>
</dbReference>
<dbReference type="GO" id="GO:0012507">
    <property type="term" value="C:ER to Golgi transport vesicle membrane"/>
    <property type="evidence" value="ECO:0007669"/>
    <property type="project" value="UniProtKB-SubCell"/>
</dbReference>
<dbReference type="GO" id="GO:0070072">
    <property type="term" value="P:vacuolar proton-transporting V-type ATPase complex assembly"/>
    <property type="evidence" value="ECO:0007669"/>
    <property type="project" value="UniProtKB-UniRule"/>
</dbReference>
<dbReference type="HAMAP" id="MF_03058">
    <property type="entry name" value="VMA21"/>
    <property type="match status" value="1"/>
</dbReference>
<dbReference type="InterPro" id="IPR019013">
    <property type="entry name" value="Vma21"/>
</dbReference>
<dbReference type="PANTHER" id="PTHR31792">
    <property type="entry name" value="VACUOLAR ATPASE ASSEMBLY INTEGRAL MEMBRANE PROTEIN VMA21"/>
    <property type="match status" value="1"/>
</dbReference>
<dbReference type="PANTHER" id="PTHR31792:SF3">
    <property type="entry name" value="VACUOLAR ATPASE ASSEMBLY INTEGRAL MEMBRANE PROTEIN VMA21"/>
    <property type="match status" value="1"/>
</dbReference>
<dbReference type="Pfam" id="PF09446">
    <property type="entry name" value="VMA21"/>
    <property type="match status" value="1"/>
</dbReference>